<accession>A3PHJ6</accession>
<organism>
    <name type="scientific">Cereibacter sphaeroides (strain ATCC 17029 / ATH 2.4.9)</name>
    <name type="common">Rhodobacter sphaeroides</name>
    <dbReference type="NCBI Taxonomy" id="349101"/>
    <lineage>
        <taxon>Bacteria</taxon>
        <taxon>Pseudomonadati</taxon>
        <taxon>Pseudomonadota</taxon>
        <taxon>Alphaproteobacteria</taxon>
        <taxon>Rhodobacterales</taxon>
        <taxon>Paracoccaceae</taxon>
        <taxon>Cereibacter</taxon>
    </lineage>
</organism>
<reference key="1">
    <citation type="submission" date="2007-02" db="EMBL/GenBank/DDBJ databases">
        <title>Complete sequence of chromosome 1 of Rhodobacter sphaeroides ATCC 17029.</title>
        <authorList>
            <person name="Copeland A."/>
            <person name="Lucas S."/>
            <person name="Lapidus A."/>
            <person name="Barry K."/>
            <person name="Detter J.C."/>
            <person name="Glavina del Rio T."/>
            <person name="Hammon N."/>
            <person name="Israni S."/>
            <person name="Dalin E."/>
            <person name="Tice H."/>
            <person name="Pitluck S."/>
            <person name="Kiss H."/>
            <person name="Brettin T."/>
            <person name="Bruce D."/>
            <person name="Han C."/>
            <person name="Tapia R."/>
            <person name="Gilna P."/>
            <person name="Schmutz J."/>
            <person name="Larimer F."/>
            <person name="Land M."/>
            <person name="Hauser L."/>
            <person name="Kyrpides N."/>
            <person name="Mikhailova N."/>
            <person name="Richardson P."/>
            <person name="Mackenzie C."/>
            <person name="Choudhary M."/>
            <person name="Donohue T.J."/>
            <person name="Kaplan S."/>
        </authorList>
    </citation>
    <scope>NUCLEOTIDE SEQUENCE [LARGE SCALE GENOMIC DNA]</scope>
    <source>
        <strain>ATCC 17029 / ATH 2.4.9</strain>
    </source>
</reference>
<dbReference type="EC" id="6.1.1.9" evidence="1"/>
<dbReference type="EMBL" id="CP000577">
    <property type="protein sequence ID" value="ABN75812.1"/>
    <property type="molecule type" value="Genomic_DNA"/>
</dbReference>
<dbReference type="RefSeq" id="WP_011840547.1">
    <property type="nucleotide sequence ID" value="NC_009049.1"/>
</dbReference>
<dbReference type="SMR" id="A3PHJ6"/>
<dbReference type="KEGG" id="rsh:Rsph17029_0699"/>
<dbReference type="HOGENOM" id="CLU_001493_0_2_5"/>
<dbReference type="GO" id="GO:0005829">
    <property type="term" value="C:cytosol"/>
    <property type="evidence" value="ECO:0007669"/>
    <property type="project" value="TreeGrafter"/>
</dbReference>
<dbReference type="GO" id="GO:0002161">
    <property type="term" value="F:aminoacyl-tRNA deacylase activity"/>
    <property type="evidence" value="ECO:0007669"/>
    <property type="project" value="InterPro"/>
</dbReference>
<dbReference type="GO" id="GO:0005524">
    <property type="term" value="F:ATP binding"/>
    <property type="evidence" value="ECO:0007669"/>
    <property type="project" value="UniProtKB-UniRule"/>
</dbReference>
<dbReference type="GO" id="GO:0004832">
    <property type="term" value="F:valine-tRNA ligase activity"/>
    <property type="evidence" value="ECO:0007669"/>
    <property type="project" value="UniProtKB-UniRule"/>
</dbReference>
<dbReference type="GO" id="GO:0006438">
    <property type="term" value="P:valyl-tRNA aminoacylation"/>
    <property type="evidence" value="ECO:0007669"/>
    <property type="project" value="UniProtKB-UniRule"/>
</dbReference>
<dbReference type="CDD" id="cd07962">
    <property type="entry name" value="Anticodon_Ia_Val"/>
    <property type="match status" value="1"/>
</dbReference>
<dbReference type="CDD" id="cd00817">
    <property type="entry name" value="ValRS_core"/>
    <property type="match status" value="1"/>
</dbReference>
<dbReference type="FunFam" id="1.10.287.380:FF:000001">
    <property type="entry name" value="Valine--tRNA ligase"/>
    <property type="match status" value="1"/>
</dbReference>
<dbReference type="FunFam" id="3.40.50.620:FF:000032">
    <property type="entry name" value="Valine--tRNA ligase"/>
    <property type="match status" value="1"/>
</dbReference>
<dbReference type="Gene3D" id="3.40.50.620">
    <property type="entry name" value="HUPs"/>
    <property type="match status" value="3"/>
</dbReference>
<dbReference type="Gene3D" id="1.10.730.10">
    <property type="entry name" value="Isoleucyl-tRNA Synthetase, Domain 1"/>
    <property type="match status" value="1"/>
</dbReference>
<dbReference type="Gene3D" id="1.10.287.380">
    <property type="entry name" value="Valyl-tRNA synthetase, C-terminal domain"/>
    <property type="match status" value="1"/>
</dbReference>
<dbReference type="Gene3D" id="3.90.740.10">
    <property type="entry name" value="Valyl/Leucyl/Isoleucyl-tRNA synthetase, editing domain"/>
    <property type="match status" value="2"/>
</dbReference>
<dbReference type="HAMAP" id="MF_02004">
    <property type="entry name" value="Val_tRNA_synth_type1"/>
    <property type="match status" value="1"/>
</dbReference>
<dbReference type="InterPro" id="IPR001412">
    <property type="entry name" value="aa-tRNA-synth_I_CS"/>
</dbReference>
<dbReference type="InterPro" id="IPR002300">
    <property type="entry name" value="aa-tRNA-synth_Ia"/>
</dbReference>
<dbReference type="InterPro" id="IPR033705">
    <property type="entry name" value="Anticodon_Ia_Val"/>
</dbReference>
<dbReference type="InterPro" id="IPR013155">
    <property type="entry name" value="M/V/L/I-tRNA-synth_anticd-bd"/>
</dbReference>
<dbReference type="InterPro" id="IPR014729">
    <property type="entry name" value="Rossmann-like_a/b/a_fold"/>
</dbReference>
<dbReference type="InterPro" id="IPR010978">
    <property type="entry name" value="tRNA-bd_arm"/>
</dbReference>
<dbReference type="InterPro" id="IPR009080">
    <property type="entry name" value="tRNAsynth_Ia_anticodon-bd"/>
</dbReference>
<dbReference type="InterPro" id="IPR037118">
    <property type="entry name" value="Val-tRNA_synth_C_sf"/>
</dbReference>
<dbReference type="InterPro" id="IPR019499">
    <property type="entry name" value="Val-tRNA_synth_tRNA-bd"/>
</dbReference>
<dbReference type="InterPro" id="IPR009008">
    <property type="entry name" value="Val/Leu/Ile-tRNA-synth_edit"/>
</dbReference>
<dbReference type="InterPro" id="IPR002303">
    <property type="entry name" value="Valyl-tRNA_ligase"/>
</dbReference>
<dbReference type="NCBIfam" id="NF004349">
    <property type="entry name" value="PRK05729.1"/>
    <property type="match status" value="1"/>
</dbReference>
<dbReference type="NCBIfam" id="TIGR00422">
    <property type="entry name" value="valS"/>
    <property type="match status" value="1"/>
</dbReference>
<dbReference type="PANTHER" id="PTHR11946:SF93">
    <property type="entry name" value="VALINE--TRNA LIGASE, CHLOROPLASTIC_MITOCHONDRIAL 2"/>
    <property type="match status" value="1"/>
</dbReference>
<dbReference type="PANTHER" id="PTHR11946">
    <property type="entry name" value="VALYL-TRNA SYNTHETASES"/>
    <property type="match status" value="1"/>
</dbReference>
<dbReference type="Pfam" id="PF08264">
    <property type="entry name" value="Anticodon_1"/>
    <property type="match status" value="1"/>
</dbReference>
<dbReference type="Pfam" id="PF00133">
    <property type="entry name" value="tRNA-synt_1"/>
    <property type="match status" value="2"/>
</dbReference>
<dbReference type="Pfam" id="PF10458">
    <property type="entry name" value="Val_tRNA-synt_C"/>
    <property type="match status" value="1"/>
</dbReference>
<dbReference type="PRINTS" id="PR00986">
    <property type="entry name" value="TRNASYNTHVAL"/>
</dbReference>
<dbReference type="SUPFAM" id="SSF47323">
    <property type="entry name" value="Anticodon-binding domain of a subclass of class I aminoacyl-tRNA synthetases"/>
    <property type="match status" value="1"/>
</dbReference>
<dbReference type="SUPFAM" id="SSF52374">
    <property type="entry name" value="Nucleotidylyl transferase"/>
    <property type="match status" value="1"/>
</dbReference>
<dbReference type="SUPFAM" id="SSF46589">
    <property type="entry name" value="tRNA-binding arm"/>
    <property type="match status" value="1"/>
</dbReference>
<dbReference type="SUPFAM" id="SSF50677">
    <property type="entry name" value="ValRS/IleRS/LeuRS editing domain"/>
    <property type="match status" value="1"/>
</dbReference>
<dbReference type="PROSITE" id="PS00178">
    <property type="entry name" value="AA_TRNA_LIGASE_I"/>
    <property type="match status" value="1"/>
</dbReference>
<protein>
    <recommendedName>
        <fullName evidence="1">Valine--tRNA ligase</fullName>
        <ecNumber evidence="1">6.1.1.9</ecNumber>
    </recommendedName>
    <alternativeName>
        <fullName evidence="1">Valyl-tRNA synthetase</fullName>
        <shortName evidence="1">ValRS</shortName>
    </alternativeName>
</protein>
<proteinExistence type="inferred from homology"/>
<sequence>MPMDKTFNAAEAEARLYDAWEKAGAFRAGANASRPETFCIMIPPPNVTGSLHMGHAFNNTLQDILTRWHRMRGFDTLWQPGQDHAGIATQMVVERELARAGNPGRREMGREAFLEKVWEWKEQSGGTIVNQLKRLGASCDWSRNAFTMDPNFQRAVLKVFVDLYEKGFIYRGKRLVNWDPHFETAISDLEVEQVEVNGNMWRLRYQLADGATYRHPVAFDEEGRPTEWEERDYLTVATTRPETMLGDTGIAVNPSDERYAHLIGKEVVLPLVGRRIPIVADDYADPSKGTGAVKITPAHDFNDWGVGQRTGLRAINVMSGRATMFLIENPDFTEGCAPSEEALALDGLDRYEARKRVVALAEEQGWLDGIDQDRHMVPHGDRSKVAIEPMLTDQWFVDTAQIVQPAIDAVRTGRTEILPERDAKTYFHWLENIEPWCISRQLWWGHQIPVWYGLDIWPARFEDDGDDTLDEVEIFELLEDGAFNHADPTHHCAFDFEGVSEKFLDDLASLPHPLNNARVVEVASRAEAIDRLAQALADYNLNEDPTHLVYPVWRDPDVLDTWFSSGLWPIGTLGWPEETPELARYFPTNVLITGFDIIFFWVARMMMMQLAVVNEVPFKTVYVHALVRDEKGKKMSKSLGNVLDPLELIDEFGADAVRFTLTAMAAMGRDLKLSTARIQGYRNFGTKLWNACRFAEMNGVWEGHGTQAAPPAATATVNRWIIGETGRVREEVDAALAAYRFDSAANALYAFVWGKVCDWYVEFSKPLFDTEAAAETRATMGWVLDQCMVLLHPIMPFITEDLWATTGSRTKMLVHTDWPSFGAELVDPAADREMSWVISLIEEIRSARAQVHVPAGLKLPVVQLALDAAGREALARNEALILRLARLEGFTEAASAPKGALTIAVEGGSFAIPLEGVIDIGAEKARLAKTLEKLEKDMAGLRGRLGNPNFVASAPEEVVDEARTRLEQGEEEGAKLSAALARLSEIA</sequence>
<evidence type="ECO:0000255" key="1">
    <source>
        <dbReference type="HAMAP-Rule" id="MF_02004"/>
    </source>
</evidence>
<gene>
    <name evidence="1" type="primary">valS</name>
    <name type="ordered locus">Rsph17029_0699</name>
</gene>
<name>SYV_CERS1</name>
<keyword id="KW-0030">Aminoacyl-tRNA synthetase</keyword>
<keyword id="KW-0067">ATP-binding</keyword>
<keyword id="KW-0175">Coiled coil</keyword>
<keyword id="KW-0963">Cytoplasm</keyword>
<keyword id="KW-0436">Ligase</keyword>
<keyword id="KW-0547">Nucleotide-binding</keyword>
<keyword id="KW-0648">Protein biosynthesis</keyword>
<feature type="chain" id="PRO_1000022172" description="Valine--tRNA ligase">
    <location>
        <begin position="1"/>
        <end position="987"/>
    </location>
</feature>
<feature type="coiled-coil region" evidence="1">
    <location>
        <begin position="917"/>
        <end position="985"/>
    </location>
</feature>
<feature type="short sequence motif" description="'HIGH' region">
    <location>
        <begin position="45"/>
        <end position="55"/>
    </location>
</feature>
<feature type="short sequence motif" description="'KMSKS' region">
    <location>
        <begin position="634"/>
        <end position="638"/>
    </location>
</feature>
<feature type="binding site" evidence="1">
    <location>
        <position position="637"/>
    </location>
    <ligand>
        <name>ATP</name>
        <dbReference type="ChEBI" id="CHEBI:30616"/>
    </ligand>
</feature>
<comment type="function">
    <text evidence="1">Catalyzes the attachment of valine to tRNA(Val). As ValRS can inadvertently accommodate and process structurally similar amino acids such as threonine, to avoid such errors, it has a 'posttransfer' editing activity that hydrolyzes mischarged Thr-tRNA(Val) in a tRNA-dependent manner.</text>
</comment>
<comment type="catalytic activity">
    <reaction evidence="1">
        <text>tRNA(Val) + L-valine + ATP = L-valyl-tRNA(Val) + AMP + diphosphate</text>
        <dbReference type="Rhea" id="RHEA:10704"/>
        <dbReference type="Rhea" id="RHEA-COMP:9672"/>
        <dbReference type="Rhea" id="RHEA-COMP:9708"/>
        <dbReference type="ChEBI" id="CHEBI:30616"/>
        <dbReference type="ChEBI" id="CHEBI:33019"/>
        <dbReference type="ChEBI" id="CHEBI:57762"/>
        <dbReference type="ChEBI" id="CHEBI:78442"/>
        <dbReference type="ChEBI" id="CHEBI:78537"/>
        <dbReference type="ChEBI" id="CHEBI:456215"/>
        <dbReference type="EC" id="6.1.1.9"/>
    </reaction>
</comment>
<comment type="subunit">
    <text evidence="1">Monomer.</text>
</comment>
<comment type="subcellular location">
    <subcellularLocation>
        <location evidence="1">Cytoplasm</location>
    </subcellularLocation>
</comment>
<comment type="domain">
    <text evidence="1">ValRS has two distinct active sites: one for aminoacylation and one for editing. The misactivated threonine is translocated from the active site to the editing site.</text>
</comment>
<comment type="domain">
    <text evidence="1">The C-terminal coiled-coil domain is crucial for aminoacylation activity.</text>
</comment>
<comment type="similarity">
    <text evidence="1">Belongs to the class-I aminoacyl-tRNA synthetase family. ValS type 1 subfamily.</text>
</comment>